<gene>
    <name evidence="1" type="primary">ureB</name>
</gene>
<proteinExistence type="inferred from homology"/>
<name>URE1_HELHE</name>
<protein>
    <recommendedName>
        <fullName evidence="1">Urease subunit beta</fullName>
        <ecNumber evidence="1">3.5.1.5</ecNumber>
    </recommendedName>
    <alternativeName>
        <fullName evidence="1">Urea amidohydrolase subunit beta</fullName>
    </alternativeName>
</protein>
<comment type="catalytic activity">
    <reaction evidence="1">
        <text>urea + 2 H2O + H(+) = hydrogencarbonate + 2 NH4(+)</text>
        <dbReference type="Rhea" id="RHEA:20557"/>
        <dbReference type="ChEBI" id="CHEBI:15377"/>
        <dbReference type="ChEBI" id="CHEBI:15378"/>
        <dbReference type="ChEBI" id="CHEBI:16199"/>
        <dbReference type="ChEBI" id="CHEBI:17544"/>
        <dbReference type="ChEBI" id="CHEBI:28938"/>
        <dbReference type="EC" id="3.5.1.5"/>
    </reaction>
</comment>
<comment type="cofactor">
    <cofactor evidence="1">
        <name>Ni cation</name>
        <dbReference type="ChEBI" id="CHEBI:25516"/>
    </cofactor>
    <text evidence="1">Binds 2 nickel ions per subunit.</text>
</comment>
<comment type="pathway">
    <text evidence="1">Nitrogen metabolism; urea degradation; CO(2) and NH(3) from urea (urease route): step 1/1.</text>
</comment>
<comment type="subunit">
    <text evidence="1">Heterohexamer of 3 UreA (alpha) and 3 UreB (beta) subunits.</text>
</comment>
<comment type="subcellular location">
    <subcellularLocation>
        <location evidence="1">Cytoplasm</location>
    </subcellularLocation>
</comment>
<comment type="PTM">
    <text evidence="1">Carboxylation allows a single lysine to coordinate two nickel ions.</text>
</comment>
<comment type="similarity">
    <text evidence="1">Belongs to the metallo-dependent hydrolases superfamily. Urease alpha subunit family.</text>
</comment>
<comment type="caution">
    <text evidence="2">The orthologous protein is known as the alpha subunit (UreC) in most other bacteria.</text>
</comment>
<organism>
    <name type="scientific">Helicobacter heilmannii</name>
    <dbReference type="NCBI Taxonomy" id="35817"/>
    <lineage>
        <taxon>Bacteria</taxon>
        <taxon>Pseudomonadati</taxon>
        <taxon>Campylobacterota</taxon>
        <taxon>Epsilonproteobacteria</taxon>
        <taxon>Campylobacterales</taxon>
        <taxon>Helicobacteraceae</taxon>
        <taxon>Helicobacter</taxon>
    </lineage>
</organism>
<reference key="1">
    <citation type="journal article" date="1994" name="Infect. Immun.">
        <title>Molecular analysis of urease genes from a newly identified uncultured species of Helicobacter.</title>
        <authorList>
            <person name="Solnick J.V."/>
            <person name="O'Rourke J."/>
            <person name="Lee A."/>
            <person name="Tompkins L.S."/>
        </authorList>
    </citation>
    <scope>NUCLEOTIDE SEQUENCE [GENOMIC DNA]</scope>
    <source>
        <strain>2</strain>
    </source>
</reference>
<evidence type="ECO:0000255" key="1">
    <source>
        <dbReference type="HAMAP-Rule" id="MF_01953"/>
    </source>
</evidence>
<evidence type="ECO:0000305" key="2"/>
<dbReference type="EC" id="3.5.1.5" evidence="1"/>
<dbReference type="EMBL" id="L25079">
    <property type="protein sequence ID" value="AAA65723.1"/>
    <property type="molecule type" value="Genomic_DNA"/>
</dbReference>
<dbReference type="SMR" id="P42823"/>
<dbReference type="STRING" id="1216962.BN341_17040"/>
<dbReference type="MEROPS" id="M38.982"/>
<dbReference type="UniPathway" id="UPA00258">
    <property type="reaction ID" value="UER00370"/>
</dbReference>
<dbReference type="GO" id="GO:0005737">
    <property type="term" value="C:cytoplasm"/>
    <property type="evidence" value="ECO:0007669"/>
    <property type="project" value="UniProtKB-SubCell"/>
</dbReference>
<dbReference type="GO" id="GO:0016151">
    <property type="term" value="F:nickel cation binding"/>
    <property type="evidence" value="ECO:0007669"/>
    <property type="project" value="UniProtKB-UniRule"/>
</dbReference>
<dbReference type="GO" id="GO:0009039">
    <property type="term" value="F:urease activity"/>
    <property type="evidence" value="ECO:0007669"/>
    <property type="project" value="UniProtKB-UniRule"/>
</dbReference>
<dbReference type="GO" id="GO:0043419">
    <property type="term" value="P:urea catabolic process"/>
    <property type="evidence" value="ECO:0007669"/>
    <property type="project" value="UniProtKB-UniRule"/>
</dbReference>
<dbReference type="CDD" id="cd00375">
    <property type="entry name" value="Urease_alpha"/>
    <property type="match status" value="1"/>
</dbReference>
<dbReference type="Gene3D" id="3.20.20.140">
    <property type="entry name" value="Metal-dependent hydrolases"/>
    <property type="match status" value="1"/>
</dbReference>
<dbReference type="Gene3D" id="2.30.40.10">
    <property type="entry name" value="Urease, subunit C, domain 1"/>
    <property type="match status" value="1"/>
</dbReference>
<dbReference type="HAMAP" id="MF_01953">
    <property type="entry name" value="Urease_alpha"/>
    <property type="match status" value="1"/>
</dbReference>
<dbReference type="InterPro" id="IPR006680">
    <property type="entry name" value="Amidohydro-rel"/>
</dbReference>
<dbReference type="InterPro" id="IPR011059">
    <property type="entry name" value="Metal-dep_hydrolase_composite"/>
</dbReference>
<dbReference type="InterPro" id="IPR032466">
    <property type="entry name" value="Metal_Hydrolase"/>
</dbReference>
<dbReference type="InterPro" id="IPR011612">
    <property type="entry name" value="Urease_alpha_N_dom"/>
</dbReference>
<dbReference type="InterPro" id="IPR050112">
    <property type="entry name" value="Urease_alpha_subunit"/>
</dbReference>
<dbReference type="InterPro" id="IPR017950">
    <property type="entry name" value="Urease_AS"/>
</dbReference>
<dbReference type="InterPro" id="IPR005848">
    <property type="entry name" value="Urease_asu"/>
</dbReference>
<dbReference type="InterPro" id="IPR017951">
    <property type="entry name" value="Urease_asu_c"/>
</dbReference>
<dbReference type="InterPro" id="IPR029754">
    <property type="entry name" value="Urease_Ni-bd"/>
</dbReference>
<dbReference type="NCBIfam" id="NF009686">
    <property type="entry name" value="PRK13207.1"/>
    <property type="match status" value="1"/>
</dbReference>
<dbReference type="NCBIfam" id="NF010591">
    <property type="entry name" value="PRK13985.1"/>
    <property type="match status" value="1"/>
</dbReference>
<dbReference type="NCBIfam" id="TIGR01792">
    <property type="entry name" value="urease_alph"/>
    <property type="match status" value="1"/>
</dbReference>
<dbReference type="PANTHER" id="PTHR43440">
    <property type="entry name" value="UREASE"/>
    <property type="match status" value="1"/>
</dbReference>
<dbReference type="PANTHER" id="PTHR43440:SF1">
    <property type="entry name" value="UREASE"/>
    <property type="match status" value="1"/>
</dbReference>
<dbReference type="Pfam" id="PF01979">
    <property type="entry name" value="Amidohydro_1"/>
    <property type="match status" value="1"/>
</dbReference>
<dbReference type="Pfam" id="PF00449">
    <property type="entry name" value="Urease_alpha"/>
    <property type="match status" value="1"/>
</dbReference>
<dbReference type="PRINTS" id="PR01752">
    <property type="entry name" value="UREASE"/>
</dbReference>
<dbReference type="SUPFAM" id="SSF51338">
    <property type="entry name" value="Composite domain of metallo-dependent hydrolases"/>
    <property type="match status" value="2"/>
</dbReference>
<dbReference type="SUPFAM" id="SSF51556">
    <property type="entry name" value="Metallo-dependent hydrolases"/>
    <property type="match status" value="1"/>
</dbReference>
<dbReference type="PROSITE" id="PS01120">
    <property type="entry name" value="UREASE_1"/>
    <property type="match status" value="1"/>
</dbReference>
<dbReference type="PROSITE" id="PS00145">
    <property type="entry name" value="UREASE_2"/>
    <property type="match status" value="1"/>
</dbReference>
<dbReference type="PROSITE" id="PS51368">
    <property type="entry name" value="UREASE_3"/>
    <property type="match status" value="1"/>
</dbReference>
<accession>P42823</accession>
<keyword id="KW-0963">Cytoplasm</keyword>
<keyword id="KW-0378">Hydrolase</keyword>
<keyword id="KW-0479">Metal-binding</keyword>
<keyword id="KW-0533">Nickel</keyword>
<sequence>MKKISRKEYVSMYGPTTGDKVRLGDTDLILEVEHDCTTYGEEIKFGGGKTIRDGMGQTNSPSSHELDLVITNALIVDYTGIYKADIGIKNGKIHGIGKAGNKDLQDGVCNRLCVGPATEALAAEGLIVTAGGIDTHIHFISPQQIPTAFASGITTMIGGGTGPADGTNATTITPGRWNLKEMLRASEEYAMNLGYLGKGNVSFEPALIDQLEAGAIGFKIHEDWGSTPSAINHALNIADKYDVQVAIHTDTLNEAGCVEDTLEAIAGRTIHTFHTEGAGGGHAPDVIKMAGEFNILPASTNPTIPFTKNTEAEHMDMLMCHHLDKNIKEDVEFADSRIRPQTIAAEDKLHDMGIFSITSSDSQAMGRVGEVITRTWQTADKNKKEFGRLPEEKGDNDNFRIKRYISKYTINPAITHGISEYVGSVEVGKYADLVLWSPAFFGIKPNMIIKGGFIALSQMGDANASIPTPQPVYYREMFGHHGKAKFDTNITFVSQVAYENGIKHELGLQRVVLPVKNCRNITKKDLKFNDVTAHIEVNPETYKVKVDGNEVTSHAADKLSLAQLYNLF</sequence>
<feature type="chain" id="PRO_0000067531" description="Urease subunit beta">
    <location>
        <begin position="1"/>
        <end position="568"/>
    </location>
</feature>
<feature type="domain" description="Urease" evidence="1">
    <location>
        <begin position="131"/>
        <end position="568"/>
    </location>
</feature>
<feature type="active site" description="Proton donor" evidence="1">
    <location>
        <position position="321"/>
    </location>
</feature>
<feature type="binding site" evidence="1">
    <location>
        <position position="136"/>
    </location>
    <ligand>
        <name>Ni(2+)</name>
        <dbReference type="ChEBI" id="CHEBI:49786"/>
        <label>1</label>
    </ligand>
</feature>
<feature type="binding site" evidence="1">
    <location>
        <position position="138"/>
    </location>
    <ligand>
        <name>Ni(2+)</name>
        <dbReference type="ChEBI" id="CHEBI:49786"/>
        <label>1</label>
    </ligand>
</feature>
<feature type="binding site" description="via carbamate group" evidence="1">
    <location>
        <position position="219"/>
    </location>
    <ligand>
        <name>Ni(2+)</name>
        <dbReference type="ChEBI" id="CHEBI:49786"/>
        <label>1</label>
    </ligand>
</feature>
<feature type="binding site" description="via carbamate group" evidence="1">
    <location>
        <position position="219"/>
    </location>
    <ligand>
        <name>Ni(2+)</name>
        <dbReference type="ChEBI" id="CHEBI:49786"/>
        <label>2</label>
    </ligand>
</feature>
<feature type="binding site" evidence="1">
    <location>
        <position position="221"/>
    </location>
    <ligand>
        <name>substrate</name>
    </ligand>
</feature>
<feature type="binding site" evidence="1">
    <location>
        <position position="248"/>
    </location>
    <ligand>
        <name>Ni(2+)</name>
        <dbReference type="ChEBI" id="CHEBI:49786"/>
        <label>2</label>
    </ligand>
</feature>
<feature type="binding site" evidence="1">
    <location>
        <position position="274"/>
    </location>
    <ligand>
        <name>Ni(2+)</name>
        <dbReference type="ChEBI" id="CHEBI:49786"/>
        <label>2</label>
    </ligand>
</feature>
<feature type="binding site" evidence="1">
    <location>
        <position position="361"/>
    </location>
    <ligand>
        <name>Ni(2+)</name>
        <dbReference type="ChEBI" id="CHEBI:49786"/>
        <label>1</label>
    </ligand>
</feature>
<feature type="modified residue" description="N6-carboxylysine" evidence="1">
    <location>
        <position position="219"/>
    </location>
</feature>